<reference key="1">
    <citation type="journal article" date="2004" name="Proc. Natl. Acad. Sci. U.S.A.">
        <title>Insights into the evolution of Yersinia pestis through whole-genome comparison with Yersinia pseudotuberculosis.</title>
        <authorList>
            <person name="Chain P.S.G."/>
            <person name="Carniel E."/>
            <person name="Larimer F.W."/>
            <person name="Lamerdin J."/>
            <person name="Stoutland P.O."/>
            <person name="Regala W.M."/>
            <person name="Georgescu A.M."/>
            <person name="Vergez L.M."/>
            <person name="Land M.L."/>
            <person name="Motin V.L."/>
            <person name="Brubaker R.R."/>
            <person name="Fowler J."/>
            <person name="Hinnebusch J."/>
            <person name="Marceau M."/>
            <person name="Medigue C."/>
            <person name="Simonet M."/>
            <person name="Chenal-Francisque V."/>
            <person name="Souza B."/>
            <person name="Dacheux D."/>
            <person name="Elliott J.M."/>
            <person name="Derbise A."/>
            <person name="Hauser L.J."/>
            <person name="Garcia E."/>
        </authorList>
    </citation>
    <scope>NUCLEOTIDE SEQUENCE [LARGE SCALE GENOMIC DNA]</scope>
    <source>
        <strain>IP32953</strain>
    </source>
</reference>
<dbReference type="EC" id="1.1.1.79" evidence="1"/>
<dbReference type="EC" id="1.1.1.81" evidence="1"/>
<dbReference type="EMBL" id="BX936398">
    <property type="protein sequence ID" value="CAH23148.1"/>
    <property type="molecule type" value="Genomic_DNA"/>
</dbReference>
<dbReference type="RefSeq" id="WP_002209630.1">
    <property type="nucleotide sequence ID" value="NZ_CP009712.1"/>
</dbReference>
<dbReference type="SMR" id="Q663W4"/>
<dbReference type="GeneID" id="57974639"/>
<dbReference type="KEGG" id="ypo:BZ17_2671"/>
<dbReference type="KEGG" id="yps:YPTB3910"/>
<dbReference type="PATRIC" id="fig|273123.14.peg.2800"/>
<dbReference type="Proteomes" id="UP000001011">
    <property type="component" value="Chromosome"/>
</dbReference>
<dbReference type="GO" id="GO:0005829">
    <property type="term" value="C:cytosol"/>
    <property type="evidence" value="ECO:0007669"/>
    <property type="project" value="TreeGrafter"/>
</dbReference>
<dbReference type="GO" id="GO:0005886">
    <property type="term" value="C:plasma membrane"/>
    <property type="evidence" value="ECO:0007669"/>
    <property type="project" value="UniProtKB-UniRule"/>
</dbReference>
<dbReference type="GO" id="GO:0030267">
    <property type="term" value="F:glyoxylate reductase (NADPH) activity"/>
    <property type="evidence" value="ECO:0007669"/>
    <property type="project" value="UniProtKB-UniRule"/>
</dbReference>
<dbReference type="GO" id="GO:0008465">
    <property type="term" value="F:hydroxypyruvate reductase (NADH) activity"/>
    <property type="evidence" value="ECO:0007669"/>
    <property type="project" value="RHEA"/>
</dbReference>
<dbReference type="GO" id="GO:0120509">
    <property type="term" value="F:hydroxypyruvate reductase (NADPH) activity"/>
    <property type="evidence" value="ECO:0007669"/>
    <property type="project" value="RHEA"/>
</dbReference>
<dbReference type="GO" id="GO:0051287">
    <property type="term" value="F:NAD binding"/>
    <property type="evidence" value="ECO:0007669"/>
    <property type="project" value="InterPro"/>
</dbReference>
<dbReference type="CDD" id="cd05301">
    <property type="entry name" value="GDH"/>
    <property type="match status" value="1"/>
</dbReference>
<dbReference type="FunFam" id="3.40.50.720:FF:000026">
    <property type="entry name" value="Glyoxylate/hydroxypyruvate reductase B"/>
    <property type="match status" value="1"/>
</dbReference>
<dbReference type="Gene3D" id="3.40.50.720">
    <property type="entry name" value="NAD(P)-binding Rossmann-like Domain"/>
    <property type="match status" value="2"/>
</dbReference>
<dbReference type="HAMAP" id="MF_01667">
    <property type="entry name" value="2_Hacid_dh_C_GhrB"/>
    <property type="match status" value="1"/>
</dbReference>
<dbReference type="InterPro" id="IPR050223">
    <property type="entry name" value="D-isomer_2-hydroxyacid_DH"/>
</dbReference>
<dbReference type="InterPro" id="IPR006139">
    <property type="entry name" value="D-isomer_2_OHA_DH_cat_dom"/>
</dbReference>
<dbReference type="InterPro" id="IPR029753">
    <property type="entry name" value="D-isomer_DH_CS"/>
</dbReference>
<dbReference type="InterPro" id="IPR029752">
    <property type="entry name" value="D-isomer_DH_CS1"/>
</dbReference>
<dbReference type="InterPro" id="IPR006140">
    <property type="entry name" value="D-isomer_DH_NAD-bd"/>
</dbReference>
<dbReference type="InterPro" id="IPR023756">
    <property type="entry name" value="Glyo/OHPyrv_Rdtase_B"/>
</dbReference>
<dbReference type="InterPro" id="IPR036291">
    <property type="entry name" value="NAD(P)-bd_dom_sf"/>
</dbReference>
<dbReference type="NCBIfam" id="NF011938">
    <property type="entry name" value="PRK15409.1"/>
    <property type="match status" value="1"/>
</dbReference>
<dbReference type="PANTHER" id="PTHR10996">
    <property type="entry name" value="2-HYDROXYACID DEHYDROGENASE-RELATED"/>
    <property type="match status" value="1"/>
</dbReference>
<dbReference type="PANTHER" id="PTHR10996:SF283">
    <property type="entry name" value="GLYOXYLATE_HYDROXYPYRUVATE REDUCTASE B"/>
    <property type="match status" value="1"/>
</dbReference>
<dbReference type="Pfam" id="PF00389">
    <property type="entry name" value="2-Hacid_dh"/>
    <property type="match status" value="1"/>
</dbReference>
<dbReference type="Pfam" id="PF02826">
    <property type="entry name" value="2-Hacid_dh_C"/>
    <property type="match status" value="1"/>
</dbReference>
<dbReference type="SUPFAM" id="SSF52283">
    <property type="entry name" value="Formate/glycerate dehydrogenase catalytic domain-like"/>
    <property type="match status" value="1"/>
</dbReference>
<dbReference type="SUPFAM" id="SSF51735">
    <property type="entry name" value="NAD(P)-binding Rossmann-fold domains"/>
    <property type="match status" value="1"/>
</dbReference>
<dbReference type="PROSITE" id="PS00065">
    <property type="entry name" value="D_2_HYDROXYACID_DH_1"/>
    <property type="match status" value="1"/>
</dbReference>
<dbReference type="PROSITE" id="PS00671">
    <property type="entry name" value="D_2_HYDROXYACID_DH_3"/>
    <property type="match status" value="1"/>
</dbReference>
<proteinExistence type="inferred from homology"/>
<comment type="function">
    <text evidence="1">Catalyzes the NADPH-dependent reduction of glyoxylate and hydroxypyruvate into glycolate and glycerate, respectively.</text>
</comment>
<comment type="catalytic activity">
    <reaction evidence="1">
        <text>glycolate + NADP(+) = glyoxylate + NADPH + H(+)</text>
        <dbReference type="Rhea" id="RHEA:10992"/>
        <dbReference type="ChEBI" id="CHEBI:15378"/>
        <dbReference type="ChEBI" id="CHEBI:29805"/>
        <dbReference type="ChEBI" id="CHEBI:36655"/>
        <dbReference type="ChEBI" id="CHEBI:57783"/>
        <dbReference type="ChEBI" id="CHEBI:58349"/>
        <dbReference type="EC" id="1.1.1.79"/>
    </reaction>
</comment>
<comment type="catalytic activity">
    <reaction evidence="1">
        <text>(R)-glycerate + NAD(+) = 3-hydroxypyruvate + NADH + H(+)</text>
        <dbReference type="Rhea" id="RHEA:17905"/>
        <dbReference type="ChEBI" id="CHEBI:15378"/>
        <dbReference type="ChEBI" id="CHEBI:16659"/>
        <dbReference type="ChEBI" id="CHEBI:17180"/>
        <dbReference type="ChEBI" id="CHEBI:57540"/>
        <dbReference type="ChEBI" id="CHEBI:57945"/>
        <dbReference type="EC" id="1.1.1.81"/>
    </reaction>
</comment>
<comment type="catalytic activity">
    <reaction evidence="1">
        <text>(R)-glycerate + NADP(+) = 3-hydroxypyruvate + NADPH + H(+)</text>
        <dbReference type="Rhea" id="RHEA:18657"/>
        <dbReference type="ChEBI" id="CHEBI:15378"/>
        <dbReference type="ChEBI" id="CHEBI:16659"/>
        <dbReference type="ChEBI" id="CHEBI:17180"/>
        <dbReference type="ChEBI" id="CHEBI:57783"/>
        <dbReference type="ChEBI" id="CHEBI:58349"/>
        <dbReference type="EC" id="1.1.1.81"/>
    </reaction>
</comment>
<comment type="subunit">
    <text evidence="1">Homodimer.</text>
</comment>
<comment type="subcellular location">
    <subcellularLocation>
        <location evidence="1">Cytoplasm</location>
    </subcellularLocation>
</comment>
<comment type="similarity">
    <text evidence="1">Belongs to the D-isomer specific 2-hydroxyacid dehydrogenase family. GhrB subfamily.</text>
</comment>
<protein>
    <recommendedName>
        <fullName evidence="1">Glyoxylate/hydroxypyruvate reductase B</fullName>
        <ecNumber evidence="1">1.1.1.79</ecNumber>
        <ecNumber evidence="1">1.1.1.81</ecNumber>
    </recommendedName>
</protein>
<organism>
    <name type="scientific">Yersinia pseudotuberculosis serotype I (strain IP32953)</name>
    <dbReference type="NCBI Taxonomy" id="273123"/>
    <lineage>
        <taxon>Bacteria</taxon>
        <taxon>Pseudomonadati</taxon>
        <taxon>Pseudomonadota</taxon>
        <taxon>Gammaproteobacteria</taxon>
        <taxon>Enterobacterales</taxon>
        <taxon>Yersiniaceae</taxon>
        <taxon>Yersinia</taxon>
    </lineage>
</organism>
<accession>Q663W4</accession>
<sequence>MKPSIVLYKSIPTDLHQRLAQHFTVNSFDGLTPDNQPELLAALQQAEGLIGSGGKIDQDFLQLAPNLRAASTISVGYDNFDVEALSQRGIALMHTPTVLTETVADTMMALMLSTARRVVELAERVKAGEWQESIGDDWFGVDVHHKTIGILGMGRIGMALAQRAHFGFSMPVLYTSRRPHEAAEQRFGARHCSLDTLLAEADFLCITLPMTEQTYHMIGREQLAKMKSSAILINAGRGPVVDEQALIAALQDGTIHAAGLDVFEQEPLPVDSPLLTLRNVVAVPHIGSATHETRYNMAACAVDNLINALTGTVKENCVNPQVLITH</sequence>
<feature type="chain" id="PRO_0000348411" description="Glyoxylate/hydroxypyruvate reductase B">
    <location>
        <begin position="1"/>
        <end position="326"/>
    </location>
</feature>
<feature type="active site" evidence="1">
    <location>
        <position position="237"/>
    </location>
</feature>
<feature type="active site" evidence="1">
    <location>
        <position position="266"/>
    </location>
</feature>
<feature type="active site" description="Proton donor" evidence="1">
    <location>
        <position position="285"/>
    </location>
</feature>
<name>GHRB_YERPS</name>
<gene>
    <name evidence="1" type="primary">ghrB</name>
    <name type="ordered locus">YPTB3910</name>
</gene>
<evidence type="ECO:0000255" key="1">
    <source>
        <dbReference type="HAMAP-Rule" id="MF_01667"/>
    </source>
</evidence>
<keyword id="KW-0963">Cytoplasm</keyword>
<keyword id="KW-0520">NAD</keyword>
<keyword id="KW-0521">NADP</keyword>
<keyword id="KW-0560">Oxidoreductase</keyword>